<proteinExistence type="evidence at transcript level"/>
<sequence>MWASWIPVLCLGVCLLLPPEPVGSEGAVPIPITCSTRGLDIRKEKADVLCPGGCPLEEFSVFGHIVYASVSSICGAAVHRGVIGHSGGPVRIYSLPGRENYSSVVANGIQSQMLSRWSASFTVTKGKSGTQEATGQAVSTAHPATGKRLKKTPEKKTGNKDCKADIAFLIDGSFNIGQRRFNLQKNFVGKVALMLGIGTEGPHVGLVQASEHPKIEFYLKNFTSAKDVLFAIKEVAFRGGNSNTGKALKHTAQKFFTADTGARKGIPKVVVVFIDGWPSDDIEEAGIVAREFGVNVFIVSVAKPIPEELGMVQDVAFVDKAVCRNNGFFSYHMPNWFGTTKYVKPLVQKLCTHEQMMCSKTCYNSVNIAFLIDGSSSVGESNFRLMLKFVSNIAKTFEISDIGAKIAAVQFTYDQRTEFSFTDYSTKENVLAVIRNISYMSGGTATGDAISFTVRNVFGPVRDSPNKNFLVIVTDGQSYDDVRGPAAAAHDAGITIFSVGVAWAPLDDLKDMASKPKESHAFFTREFTGLEPIVSDVIRGICRDFLESQQ</sequence>
<protein>
    <recommendedName>
        <fullName>Cochlin</fullName>
    </recommendedName>
</protein>
<comment type="function">
    <text evidence="1">Plays a role in the control of cell shape and motility in the trabecular meshwork.</text>
</comment>
<comment type="subunit">
    <text evidence="2">Monomer. May form homodimer. Interacts with type II collagen. Interacts with SLC44A2. Interacts with ANXA2.</text>
</comment>
<comment type="subcellular location">
    <subcellularLocation>
        <location evidence="2">Secreted</location>
        <location evidence="2">Extracellular space</location>
    </subcellularLocation>
</comment>
<comment type="PTM">
    <text evidence="2">N-glycosylated.</text>
</comment>
<comment type="online information" name="Protein Spotlight">
    <link uri="https://www.proteinspotlight.org/back_issues/004"/>
    <text>The Japanese Horseshoe Crab and Deafness - Issue 4 of November 2000</text>
</comment>
<evidence type="ECO:0000250" key="1"/>
<evidence type="ECO:0000250" key="2">
    <source>
        <dbReference type="UniProtKB" id="O43405"/>
    </source>
</evidence>
<evidence type="ECO:0000255" key="3"/>
<evidence type="ECO:0000255" key="4">
    <source>
        <dbReference type="PROSITE-ProRule" id="PRU00123"/>
    </source>
</evidence>
<evidence type="ECO:0000255" key="5">
    <source>
        <dbReference type="PROSITE-ProRule" id="PRU00219"/>
    </source>
</evidence>
<evidence type="ECO:0000256" key="6">
    <source>
        <dbReference type="SAM" id="MobiDB-lite"/>
    </source>
</evidence>
<gene>
    <name type="primary">COCH</name>
</gene>
<accession>Q5EA64</accession>
<name>COCH_BOVIN</name>
<feature type="signal peptide" evidence="3">
    <location>
        <begin position="1"/>
        <end position="24"/>
    </location>
</feature>
<feature type="chain" id="PRO_0000266019" description="Cochlin">
    <location>
        <begin position="25"/>
        <end position="550"/>
    </location>
</feature>
<feature type="domain" description="LCCL" evidence="4">
    <location>
        <begin position="28"/>
        <end position="121"/>
    </location>
</feature>
<feature type="domain" description="VWFA 1" evidence="5">
    <location>
        <begin position="165"/>
        <end position="350"/>
    </location>
</feature>
<feature type="domain" description="VWFA 2" evidence="5">
    <location>
        <begin position="367"/>
        <end position="537"/>
    </location>
</feature>
<feature type="region of interest" description="Disordered" evidence="6">
    <location>
        <begin position="128"/>
        <end position="158"/>
    </location>
</feature>
<feature type="compositionally biased region" description="Polar residues" evidence="6">
    <location>
        <begin position="128"/>
        <end position="139"/>
    </location>
</feature>
<feature type="glycosylation site" description="N-linked (GlcNAc...) asparagine" evidence="3">
    <location>
        <position position="100"/>
    </location>
</feature>
<feature type="glycosylation site" description="N-linked (GlcNAc...) asparagine" evidence="3">
    <location>
        <position position="221"/>
    </location>
</feature>
<feature type="glycosylation site" description="N-linked (GlcNAc...) asparagine" evidence="3">
    <location>
        <position position="436"/>
    </location>
</feature>
<feature type="disulfide bond" evidence="4">
    <location>
        <begin position="34"/>
        <end position="50"/>
    </location>
</feature>
<feature type="disulfide bond" evidence="4">
    <location>
        <begin position="54"/>
        <end position="74"/>
    </location>
</feature>
<dbReference type="EMBL" id="BT020705">
    <property type="protein sequence ID" value="AAX08722.1"/>
    <property type="molecule type" value="mRNA"/>
</dbReference>
<dbReference type="RefSeq" id="NP_001071310.1">
    <property type="nucleotide sequence ID" value="NM_001077842.1"/>
</dbReference>
<dbReference type="SMR" id="Q5EA64"/>
<dbReference type="FunCoup" id="Q5EA64">
    <property type="interactions" value="353"/>
</dbReference>
<dbReference type="STRING" id="9913.ENSBTAP00000063099"/>
<dbReference type="GlyCosmos" id="Q5EA64">
    <property type="glycosylation" value="3 sites, No reported glycans"/>
</dbReference>
<dbReference type="GlyGen" id="Q5EA64">
    <property type="glycosylation" value="3 sites"/>
</dbReference>
<dbReference type="PaxDb" id="9913-ENSBTAP00000049747"/>
<dbReference type="GeneID" id="504316"/>
<dbReference type="KEGG" id="bta:504316"/>
<dbReference type="CTD" id="1690"/>
<dbReference type="eggNOG" id="KOG1216">
    <property type="taxonomic scope" value="Eukaryota"/>
</dbReference>
<dbReference type="InParanoid" id="Q5EA64"/>
<dbReference type="OrthoDB" id="441660at2759"/>
<dbReference type="Proteomes" id="UP000009136">
    <property type="component" value="Unplaced"/>
</dbReference>
<dbReference type="GO" id="GO:0062023">
    <property type="term" value="C:collagen-containing extracellular matrix"/>
    <property type="evidence" value="ECO:0000250"/>
    <property type="project" value="UniProtKB"/>
</dbReference>
<dbReference type="GO" id="GO:0005576">
    <property type="term" value="C:extracellular region"/>
    <property type="evidence" value="ECO:0007669"/>
    <property type="project" value="UniProtKB-SubCell"/>
</dbReference>
<dbReference type="GO" id="GO:0005518">
    <property type="term" value="F:collagen binding"/>
    <property type="evidence" value="ECO:0000250"/>
    <property type="project" value="UniProtKB"/>
</dbReference>
<dbReference type="GO" id="GO:0008360">
    <property type="term" value="P:regulation of cell shape"/>
    <property type="evidence" value="ECO:0000250"/>
    <property type="project" value="UniProtKB"/>
</dbReference>
<dbReference type="CDD" id="cd01472">
    <property type="entry name" value="vWA_collagen"/>
    <property type="match status" value="1"/>
</dbReference>
<dbReference type="CDD" id="cd01482">
    <property type="entry name" value="vWA_collagen_alphaI-XII-like"/>
    <property type="match status" value="1"/>
</dbReference>
<dbReference type="FunFam" id="3.40.50.410:FF:000029">
    <property type="entry name" value="Cochlin"/>
    <property type="match status" value="1"/>
</dbReference>
<dbReference type="FunFam" id="2.170.130.20:FF:000001">
    <property type="entry name" value="Cysteine-rich secretory protein LCCL domain-containing 1"/>
    <property type="match status" value="1"/>
</dbReference>
<dbReference type="FunFam" id="3.40.50.410:FF:000009">
    <property type="entry name" value="Putative vitrin"/>
    <property type="match status" value="1"/>
</dbReference>
<dbReference type="Gene3D" id="2.170.130.20">
    <property type="entry name" value="LCCL-like domain"/>
    <property type="match status" value="1"/>
</dbReference>
<dbReference type="Gene3D" id="3.40.50.410">
    <property type="entry name" value="von Willebrand factor, type A domain"/>
    <property type="match status" value="2"/>
</dbReference>
<dbReference type="InterPro" id="IPR050525">
    <property type="entry name" value="ECM_Assembly_Org"/>
</dbReference>
<dbReference type="InterPro" id="IPR004043">
    <property type="entry name" value="LCCL"/>
</dbReference>
<dbReference type="InterPro" id="IPR036609">
    <property type="entry name" value="LCCL_sf"/>
</dbReference>
<dbReference type="InterPro" id="IPR002035">
    <property type="entry name" value="VWF_A"/>
</dbReference>
<dbReference type="InterPro" id="IPR036465">
    <property type="entry name" value="vWFA_dom_sf"/>
</dbReference>
<dbReference type="PANTHER" id="PTHR24020:SF36">
    <property type="entry name" value="COCHLIN"/>
    <property type="match status" value="1"/>
</dbReference>
<dbReference type="PANTHER" id="PTHR24020">
    <property type="entry name" value="COLLAGEN ALPHA"/>
    <property type="match status" value="1"/>
</dbReference>
<dbReference type="Pfam" id="PF03815">
    <property type="entry name" value="LCCL"/>
    <property type="match status" value="1"/>
</dbReference>
<dbReference type="Pfam" id="PF00092">
    <property type="entry name" value="VWA"/>
    <property type="match status" value="2"/>
</dbReference>
<dbReference type="PRINTS" id="PR00453">
    <property type="entry name" value="VWFADOMAIN"/>
</dbReference>
<dbReference type="SMART" id="SM00603">
    <property type="entry name" value="LCCL"/>
    <property type="match status" value="1"/>
</dbReference>
<dbReference type="SMART" id="SM00327">
    <property type="entry name" value="VWA"/>
    <property type="match status" value="2"/>
</dbReference>
<dbReference type="SUPFAM" id="SSF69848">
    <property type="entry name" value="LCCL domain"/>
    <property type="match status" value="1"/>
</dbReference>
<dbReference type="SUPFAM" id="SSF53300">
    <property type="entry name" value="vWA-like"/>
    <property type="match status" value="2"/>
</dbReference>
<dbReference type="PROSITE" id="PS50820">
    <property type="entry name" value="LCCL"/>
    <property type="match status" value="1"/>
</dbReference>
<dbReference type="PROSITE" id="PS50234">
    <property type="entry name" value="VWFA"/>
    <property type="match status" value="2"/>
</dbReference>
<organism>
    <name type="scientific">Bos taurus</name>
    <name type="common">Bovine</name>
    <dbReference type="NCBI Taxonomy" id="9913"/>
    <lineage>
        <taxon>Eukaryota</taxon>
        <taxon>Metazoa</taxon>
        <taxon>Chordata</taxon>
        <taxon>Craniata</taxon>
        <taxon>Vertebrata</taxon>
        <taxon>Euteleostomi</taxon>
        <taxon>Mammalia</taxon>
        <taxon>Eutheria</taxon>
        <taxon>Laurasiatheria</taxon>
        <taxon>Artiodactyla</taxon>
        <taxon>Ruminantia</taxon>
        <taxon>Pecora</taxon>
        <taxon>Bovidae</taxon>
        <taxon>Bovinae</taxon>
        <taxon>Bos</taxon>
    </lineage>
</organism>
<keyword id="KW-1015">Disulfide bond</keyword>
<keyword id="KW-0325">Glycoprotein</keyword>
<keyword id="KW-1185">Reference proteome</keyword>
<keyword id="KW-0677">Repeat</keyword>
<keyword id="KW-0964">Secreted</keyword>
<keyword id="KW-0732">Signal</keyword>
<reference key="1">
    <citation type="journal article" date="2005" name="BMC Genomics">
        <title>Characterization of 954 bovine full-CDS cDNA sequences.</title>
        <authorList>
            <person name="Harhay G.P."/>
            <person name="Sonstegard T.S."/>
            <person name="Keele J.W."/>
            <person name="Heaton M.P."/>
            <person name="Clawson M.L."/>
            <person name="Snelling W.M."/>
            <person name="Wiedmann R.T."/>
            <person name="Van Tassell C.P."/>
            <person name="Smith T.P.L."/>
        </authorList>
    </citation>
    <scope>NUCLEOTIDE SEQUENCE [LARGE SCALE MRNA]</scope>
</reference>